<reference key="1">
    <citation type="submission" date="2006-12" db="EMBL/GenBank/DDBJ databases">
        <title>Complete sequence of Chlorobium phaeobacteroides DSM 266.</title>
        <authorList>
            <consortium name="US DOE Joint Genome Institute"/>
            <person name="Copeland A."/>
            <person name="Lucas S."/>
            <person name="Lapidus A."/>
            <person name="Barry K."/>
            <person name="Detter J.C."/>
            <person name="Glavina del Rio T."/>
            <person name="Hammon N."/>
            <person name="Israni S."/>
            <person name="Pitluck S."/>
            <person name="Goltsman E."/>
            <person name="Schmutz J."/>
            <person name="Larimer F."/>
            <person name="Land M."/>
            <person name="Hauser L."/>
            <person name="Mikhailova N."/>
            <person name="Li T."/>
            <person name="Overmann J."/>
            <person name="Bryant D.A."/>
            <person name="Richardson P."/>
        </authorList>
    </citation>
    <scope>NUCLEOTIDE SEQUENCE [LARGE SCALE GENOMIC DNA]</scope>
    <source>
        <strain>DSM 266 / SMG 266 / 2430</strain>
    </source>
</reference>
<keyword id="KW-0131">Cell cycle</keyword>
<keyword id="KW-0132">Cell division</keyword>
<keyword id="KW-0997">Cell inner membrane</keyword>
<keyword id="KW-1003">Cell membrane</keyword>
<keyword id="KW-0133">Cell shape</keyword>
<keyword id="KW-0961">Cell wall biogenesis/degradation</keyword>
<keyword id="KW-0460">Magnesium</keyword>
<keyword id="KW-0472">Membrane</keyword>
<keyword id="KW-0479">Metal-binding</keyword>
<keyword id="KW-0573">Peptidoglycan synthesis</keyword>
<keyword id="KW-1185">Reference proteome</keyword>
<keyword id="KW-0808">Transferase</keyword>
<keyword id="KW-0812">Transmembrane</keyword>
<keyword id="KW-1133">Transmembrane helix</keyword>
<name>MRAY_CHLPD</name>
<organism>
    <name type="scientific">Chlorobium phaeobacteroides (strain DSM 266 / SMG 266 / 2430)</name>
    <dbReference type="NCBI Taxonomy" id="290317"/>
    <lineage>
        <taxon>Bacteria</taxon>
        <taxon>Pseudomonadati</taxon>
        <taxon>Chlorobiota</taxon>
        <taxon>Chlorobiia</taxon>
        <taxon>Chlorobiales</taxon>
        <taxon>Chlorobiaceae</taxon>
        <taxon>Chlorobium/Pelodictyon group</taxon>
        <taxon>Chlorobium</taxon>
    </lineage>
</organism>
<protein>
    <recommendedName>
        <fullName evidence="1">Phospho-N-acetylmuramoyl-pentapeptide-transferase</fullName>
        <ecNumber evidence="1">2.7.8.13</ecNumber>
    </recommendedName>
    <alternativeName>
        <fullName evidence="1">UDP-MurNAc-pentapeptide phosphotransferase</fullName>
    </alternativeName>
</protein>
<comment type="function">
    <text evidence="1">Catalyzes the initial step of the lipid cycle reactions in the biosynthesis of the cell wall peptidoglycan: transfers peptidoglycan precursor phospho-MurNAc-pentapeptide from UDP-MurNAc-pentapeptide onto the lipid carrier undecaprenyl phosphate, yielding undecaprenyl-pyrophosphoryl-MurNAc-pentapeptide, known as lipid I.</text>
</comment>
<comment type="catalytic activity">
    <reaction evidence="1">
        <text>UDP-N-acetyl-alpha-D-muramoyl-L-alanyl-gamma-D-glutamyl-meso-2,6-diaminopimeloyl-D-alanyl-D-alanine + di-trans,octa-cis-undecaprenyl phosphate = di-trans,octa-cis-undecaprenyl diphospho-N-acetyl-alpha-D-muramoyl-L-alanyl-D-glutamyl-meso-2,6-diaminopimeloyl-D-alanyl-D-alanine + UMP</text>
        <dbReference type="Rhea" id="RHEA:28386"/>
        <dbReference type="ChEBI" id="CHEBI:57865"/>
        <dbReference type="ChEBI" id="CHEBI:60392"/>
        <dbReference type="ChEBI" id="CHEBI:61386"/>
        <dbReference type="ChEBI" id="CHEBI:61387"/>
        <dbReference type="EC" id="2.7.8.13"/>
    </reaction>
</comment>
<comment type="cofactor">
    <cofactor evidence="1">
        <name>Mg(2+)</name>
        <dbReference type="ChEBI" id="CHEBI:18420"/>
    </cofactor>
</comment>
<comment type="pathway">
    <text evidence="1">Cell wall biogenesis; peptidoglycan biosynthesis.</text>
</comment>
<comment type="subcellular location">
    <subcellularLocation>
        <location evidence="1">Cell inner membrane</location>
        <topology evidence="1">Multi-pass membrane protein</topology>
    </subcellularLocation>
</comment>
<comment type="similarity">
    <text evidence="1">Belongs to the glycosyltransferase 4 family. MraY subfamily.</text>
</comment>
<evidence type="ECO:0000255" key="1">
    <source>
        <dbReference type="HAMAP-Rule" id="MF_00038"/>
    </source>
</evidence>
<dbReference type="EC" id="2.7.8.13" evidence="1"/>
<dbReference type="EMBL" id="CP000492">
    <property type="protein sequence ID" value="ABL66708.1"/>
    <property type="molecule type" value="Genomic_DNA"/>
</dbReference>
<dbReference type="RefSeq" id="WP_015961235.1">
    <property type="nucleotide sequence ID" value="NC_008639.1"/>
</dbReference>
<dbReference type="SMR" id="A1BJY1"/>
<dbReference type="STRING" id="290317.Cpha266_2724"/>
<dbReference type="KEGG" id="cph:Cpha266_2724"/>
<dbReference type="eggNOG" id="COG0472">
    <property type="taxonomic scope" value="Bacteria"/>
</dbReference>
<dbReference type="HOGENOM" id="CLU_023982_0_0_10"/>
<dbReference type="OrthoDB" id="9805475at2"/>
<dbReference type="UniPathway" id="UPA00219"/>
<dbReference type="Proteomes" id="UP000008701">
    <property type="component" value="Chromosome"/>
</dbReference>
<dbReference type="GO" id="GO:0005886">
    <property type="term" value="C:plasma membrane"/>
    <property type="evidence" value="ECO:0007669"/>
    <property type="project" value="UniProtKB-SubCell"/>
</dbReference>
<dbReference type="GO" id="GO:0046872">
    <property type="term" value="F:metal ion binding"/>
    <property type="evidence" value="ECO:0007669"/>
    <property type="project" value="UniProtKB-KW"/>
</dbReference>
<dbReference type="GO" id="GO:0008963">
    <property type="term" value="F:phospho-N-acetylmuramoyl-pentapeptide-transferase activity"/>
    <property type="evidence" value="ECO:0007669"/>
    <property type="project" value="UniProtKB-UniRule"/>
</dbReference>
<dbReference type="GO" id="GO:0051992">
    <property type="term" value="F:UDP-N-acetylmuramoyl-L-alanyl-D-glutamyl-meso-2,6-diaminopimelyl-D-alanyl-D-alanine:undecaprenyl-phosphate transferase activity"/>
    <property type="evidence" value="ECO:0007669"/>
    <property type="project" value="RHEA"/>
</dbReference>
<dbReference type="GO" id="GO:0051301">
    <property type="term" value="P:cell division"/>
    <property type="evidence" value="ECO:0007669"/>
    <property type="project" value="UniProtKB-KW"/>
</dbReference>
<dbReference type="GO" id="GO:0071555">
    <property type="term" value="P:cell wall organization"/>
    <property type="evidence" value="ECO:0007669"/>
    <property type="project" value="UniProtKB-KW"/>
</dbReference>
<dbReference type="GO" id="GO:0009252">
    <property type="term" value="P:peptidoglycan biosynthetic process"/>
    <property type="evidence" value="ECO:0007669"/>
    <property type="project" value="UniProtKB-UniRule"/>
</dbReference>
<dbReference type="GO" id="GO:0008360">
    <property type="term" value="P:regulation of cell shape"/>
    <property type="evidence" value="ECO:0007669"/>
    <property type="project" value="UniProtKB-KW"/>
</dbReference>
<dbReference type="CDD" id="cd06852">
    <property type="entry name" value="GT_MraY"/>
    <property type="match status" value="1"/>
</dbReference>
<dbReference type="HAMAP" id="MF_00038">
    <property type="entry name" value="MraY"/>
    <property type="match status" value="1"/>
</dbReference>
<dbReference type="InterPro" id="IPR000715">
    <property type="entry name" value="Glycosyl_transferase_4"/>
</dbReference>
<dbReference type="InterPro" id="IPR003524">
    <property type="entry name" value="PNAcMuramoyl-5peptid_Trfase"/>
</dbReference>
<dbReference type="InterPro" id="IPR018480">
    <property type="entry name" value="PNAcMuramoyl-5peptid_Trfase_CS"/>
</dbReference>
<dbReference type="NCBIfam" id="TIGR00445">
    <property type="entry name" value="mraY"/>
    <property type="match status" value="1"/>
</dbReference>
<dbReference type="PANTHER" id="PTHR22926">
    <property type="entry name" value="PHOSPHO-N-ACETYLMURAMOYL-PENTAPEPTIDE-TRANSFERASE"/>
    <property type="match status" value="1"/>
</dbReference>
<dbReference type="PANTHER" id="PTHR22926:SF5">
    <property type="entry name" value="PHOSPHO-N-ACETYLMURAMOYL-PENTAPEPTIDE-TRANSFERASE HOMOLOG"/>
    <property type="match status" value="1"/>
</dbReference>
<dbReference type="Pfam" id="PF00953">
    <property type="entry name" value="Glycos_transf_4"/>
    <property type="match status" value="1"/>
</dbReference>
<dbReference type="PROSITE" id="PS01348">
    <property type="entry name" value="MRAY_2"/>
    <property type="match status" value="1"/>
</dbReference>
<sequence length="368" mass="40745">MLYYLLKYINDVFDPPGFGVIEFLTFRASAAAITALLISLMAGPWFIRYLKGRFIEPVKEEAPPEHKKKKELPTMGGILIIFSIEVSVFLWAKFDDPHVWLVMLAIFWMGLIGFIDDYRKVVLKIKGGLSARYKLLGQISLGLVIGLYTWFDPAFAVLLSKTTIPFIKQLSIDYGIFYIPIVIFIITAVSNSVNLTDGLDGLASGTTAIVVSALGAFSYLAGNAVYADYLKIPFIPGGGEIAVVCMAIVMACVGFLWFNSNPAEIIMGDTGSLALGSAVAVIALLIKQELLLPVLAGVFVLEALSVSMQVLYFKLTKKLSGQGRRIFLMAPLHHHFQLKGWAEQKIVIRFWIISILFFLTSLMTLKLR</sequence>
<feature type="chain" id="PRO_1000002959" description="Phospho-N-acetylmuramoyl-pentapeptide-transferase">
    <location>
        <begin position="1"/>
        <end position="368"/>
    </location>
</feature>
<feature type="transmembrane region" description="Helical" evidence="1">
    <location>
        <begin position="30"/>
        <end position="50"/>
    </location>
</feature>
<feature type="transmembrane region" description="Helical" evidence="1">
    <location>
        <begin position="72"/>
        <end position="92"/>
    </location>
</feature>
<feature type="transmembrane region" description="Helical" evidence="1">
    <location>
        <begin position="98"/>
        <end position="118"/>
    </location>
</feature>
<feature type="transmembrane region" description="Helical" evidence="1">
    <location>
        <begin position="139"/>
        <end position="159"/>
    </location>
</feature>
<feature type="transmembrane region" description="Helical" evidence="1">
    <location>
        <begin position="170"/>
        <end position="190"/>
    </location>
</feature>
<feature type="transmembrane region" description="Helical" evidence="1">
    <location>
        <begin position="201"/>
        <end position="221"/>
    </location>
</feature>
<feature type="transmembrane region" description="Helical" evidence="1">
    <location>
        <begin position="238"/>
        <end position="258"/>
    </location>
</feature>
<feature type="transmembrane region" description="Helical" evidence="1">
    <location>
        <begin position="264"/>
        <end position="286"/>
    </location>
</feature>
<feature type="transmembrane region" description="Helical" evidence="1">
    <location>
        <begin position="345"/>
        <end position="365"/>
    </location>
</feature>
<proteinExistence type="inferred from homology"/>
<accession>A1BJY1</accession>
<gene>
    <name evidence="1" type="primary">mraY</name>
    <name type="ordered locus">Cpha266_2724</name>
</gene>